<feature type="chain" id="PRO_0000383443" description="L-lactate dehydrogenase">
    <location>
        <begin position="1"/>
        <end position="396"/>
    </location>
</feature>
<feature type="domain" description="FMN hydroxy acid dehydrogenase" evidence="1">
    <location>
        <begin position="1"/>
        <end position="380"/>
    </location>
</feature>
<feature type="active site" description="Proton acceptor" evidence="1">
    <location>
        <position position="275"/>
    </location>
</feature>
<feature type="binding site" evidence="1">
    <location>
        <position position="24"/>
    </location>
    <ligand>
        <name>substrate</name>
    </ligand>
</feature>
<feature type="binding site" evidence="1">
    <location>
        <position position="106"/>
    </location>
    <ligand>
        <name>FMN</name>
        <dbReference type="ChEBI" id="CHEBI:58210"/>
    </ligand>
</feature>
<feature type="binding site" evidence="1">
    <location>
        <position position="127"/>
    </location>
    <ligand>
        <name>FMN</name>
        <dbReference type="ChEBI" id="CHEBI:58210"/>
    </ligand>
</feature>
<feature type="binding site" evidence="1">
    <location>
        <position position="129"/>
    </location>
    <ligand>
        <name>substrate</name>
    </ligand>
</feature>
<feature type="binding site" evidence="1">
    <location>
        <position position="155"/>
    </location>
    <ligand>
        <name>FMN</name>
        <dbReference type="ChEBI" id="CHEBI:58210"/>
    </ligand>
</feature>
<feature type="binding site" evidence="1">
    <location>
        <position position="164"/>
    </location>
    <ligand>
        <name>substrate</name>
    </ligand>
</feature>
<feature type="binding site" evidence="1">
    <location>
        <position position="251"/>
    </location>
    <ligand>
        <name>FMN</name>
        <dbReference type="ChEBI" id="CHEBI:58210"/>
    </ligand>
</feature>
<feature type="binding site" evidence="1">
    <location>
        <position position="278"/>
    </location>
    <ligand>
        <name>substrate</name>
    </ligand>
</feature>
<feature type="binding site" evidence="1">
    <location>
        <begin position="306"/>
        <end position="330"/>
    </location>
    <ligand>
        <name>FMN</name>
        <dbReference type="ChEBI" id="CHEBI:58210"/>
    </ligand>
</feature>
<reference key="1">
    <citation type="journal article" date="2011" name="J. Bacteriol.">
        <title>Comparative genomics of 28 Salmonella enterica isolates: evidence for CRISPR-mediated adaptive sublineage evolution.</title>
        <authorList>
            <person name="Fricke W.F."/>
            <person name="Mammel M.K."/>
            <person name="McDermott P.F."/>
            <person name="Tartera C."/>
            <person name="White D.G."/>
            <person name="Leclerc J.E."/>
            <person name="Ravel J."/>
            <person name="Cebula T.A."/>
        </authorList>
    </citation>
    <scope>NUCLEOTIDE SEQUENCE [LARGE SCALE GENOMIC DNA]</scope>
    <source>
        <strain>SL254</strain>
    </source>
</reference>
<name>LLDD_SALNS</name>
<dbReference type="EC" id="1.1.-.-" evidence="1"/>
<dbReference type="EMBL" id="CP001113">
    <property type="protein sequence ID" value="ACF65194.1"/>
    <property type="molecule type" value="Genomic_DNA"/>
</dbReference>
<dbReference type="RefSeq" id="WP_000586982.1">
    <property type="nucleotide sequence ID" value="NZ_CCMR01000004.1"/>
</dbReference>
<dbReference type="SMR" id="B4SXA4"/>
<dbReference type="KEGG" id="see:SNSL254_A3973"/>
<dbReference type="HOGENOM" id="CLU_020639_0_0_6"/>
<dbReference type="Proteomes" id="UP000008824">
    <property type="component" value="Chromosome"/>
</dbReference>
<dbReference type="GO" id="GO:0005886">
    <property type="term" value="C:plasma membrane"/>
    <property type="evidence" value="ECO:0007669"/>
    <property type="project" value="UniProtKB-SubCell"/>
</dbReference>
<dbReference type="GO" id="GO:0010181">
    <property type="term" value="F:FMN binding"/>
    <property type="evidence" value="ECO:0007669"/>
    <property type="project" value="InterPro"/>
</dbReference>
<dbReference type="GO" id="GO:0004459">
    <property type="term" value="F:L-lactate dehydrogenase activity"/>
    <property type="evidence" value="ECO:0007669"/>
    <property type="project" value="UniProtKB-UniRule"/>
</dbReference>
<dbReference type="GO" id="GO:0009060">
    <property type="term" value="P:aerobic respiration"/>
    <property type="evidence" value="ECO:0007669"/>
    <property type="project" value="TreeGrafter"/>
</dbReference>
<dbReference type="GO" id="GO:0006089">
    <property type="term" value="P:lactate metabolic process"/>
    <property type="evidence" value="ECO:0007669"/>
    <property type="project" value="UniProtKB-UniRule"/>
</dbReference>
<dbReference type="CDD" id="cd02809">
    <property type="entry name" value="alpha_hydroxyacid_oxid_FMN"/>
    <property type="match status" value="1"/>
</dbReference>
<dbReference type="FunFam" id="3.20.20.70:FF:000029">
    <property type="entry name" value="L-lactate dehydrogenase"/>
    <property type="match status" value="1"/>
</dbReference>
<dbReference type="Gene3D" id="3.20.20.70">
    <property type="entry name" value="Aldolase class I"/>
    <property type="match status" value="1"/>
</dbReference>
<dbReference type="HAMAP" id="MF_01559">
    <property type="entry name" value="L_lact_dehydr"/>
    <property type="match status" value="1"/>
</dbReference>
<dbReference type="InterPro" id="IPR013785">
    <property type="entry name" value="Aldolase_TIM"/>
</dbReference>
<dbReference type="InterPro" id="IPR012133">
    <property type="entry name" value="Alpha-hydoxy_acid_DH_FMN"/>
</dbReference>
<dbReference type="InterPro" id="IPR000262">
    <property type="entry name" value="FMN-dep_DH"/>
</dbReference>
<dbReference type="InterPro" id="IPR037396">
    <property type="entry name" value="FMN_HAD"/>
</dbReference>
<dbReference type="InterPro" id="IPR008259">
    <property type="entry name" value="FMN_hydac_DH_AS"/>
</dbReference>
<dbReference type="InterPro" id="IPR020920">
    <property type="entry name" value="LldD"/>
</dbReference>
<dbReference type="NCBIfam" id="NF033901">
    <property type="entry name" value="L_lactate_LldD"/>
    <property type="match status" value="1"/>
</dbReference>
<dbReference type="NCBIfam" id="NF008398">
    <property type="entry name" value="PRK11197.1"/>
    <property type="match status" value="1"/>
</dbReference>
<dbReference type="PANTHER" id="PTHR10578:SF85">
    <property type="entry name" value="L-LACTATE DEHYDROGENASE"/>
    <property type="match status" value="1"/>
</dbReference>
<dbReference type="PANTHER" id="PTHR10578">
    <property type="entry name" value="S -2-HYDROXY-ACID OXIDASE-RELATED"/>
    <property type="match status" value="1"/>
</dbReference>
<dbReference type="Pfam" id="PF01070">
    <property type="entry name" value="FMN_dh"/>
    <property type="match status" value="1"/>
</dbReference>
<dbReference type="PIRSF" id="PIRSF000138">
    <property type="entry name" value="Al-hdrx_acd_dh"/>
    <property type="match status" value="1"/>
</dbReference>
<dbReference type="SUPFAM" id="SSF51395">
    <property type="entry name" value="FMN-linked oxidoreductases"/>
    <property type="match status" value="1"/>
</dbReference>
<dbReference type="PROSITE" id="PS00557">
    <property type="entry name" value="FMN_HYDROXY_ACID_DH_1"/>
    <property type="match status" value="1"/>
</dbReference>
<dbReference type="PROSITE" id="PS51349">
    <property type="entry name" value="FMN_HYDROXY_ACID_DH_2"/>
    <property type="match status" value="1"/>
</dbReference>
<evidence type="ECO:0000255" key="1">
    <source>
        <dbReference type="HAMAP-Rule" id="MF_01559"/>
    </source>
</evidence>
<protein>
    <recommendedName>
        <fullName evidence="1">L-lactate dehydrogenase</fullName>
        <ecNumber evidence="1">1.1.-.-</ecNumber>
    </recommendedName>
</protein>
<gene>
    <name evidence="1" type="primary">lldD</name>
    <name type="ordered locus">SNSL254_A3973</name>
</gene>
<proteinExistence type="inferred from homology"/>
<organism>
    <name type="scientific">Salmonella newport (strain SL254)</name>
    <dbReference type="NCBI Taxonomy" id="423368"/>
    <lineage>
        <taxon>Bacteria</taxon>
        <taxon>Pseudomonadati</taxon>
        <taxon>Pseudomonadota</taxon>
        <taxon>Gammaproteobacteria</taxon>
        <taxon>Enterobacterales</taxon>
        <taxon>Enterobacteriaceae</taxon>
        <taxon>Salmonella</taxon>
    </lineage>
</organism>
<sequence length="396" mass="42740">MIISAASDYRAAAQRTLPPFLFHYIDGGAYAEYTLRRNVEDLSQVALRQRVLKNMSDLSLETPLFNETLSMPVALAPVGLCGMYARRGEVQAAAAADAKGIPFTLSTVSVCPIEEVAPTIKRPMWFQLYVLRDRGFMRNALERAKAAGCSTLVFTVDMPTPGARYRDAHSGMSGPNAAMRRYWQAVMHPKWAWDVGLNGRPHDLGNISAYLGKPTGLEDYIGWLANNFDPSISWKDLEWIREFWDGPMVIKGILDPEDARDAVRFGADGIVVSNHGGRQLDGVLSSARALPAIADAVKGDIAILADSGIRNGLDVVRMIALGADTVLLGRAYLYALATAGKAGVANLLDLIEKEMKVAMTLTGAKSISEISGDSLVQELGKSLPTALAPMSKGDAA</sequence>
<accession>B4SXA4</accession>
<keyword id="KW-0997">Cell inner membrane</keyword>
<keyword id="KW-1003">Cell membrane</keyword>
<keyword id="KW-0285">Flavoprotein</keyword>
<keyword id="KW-0288">FMN</keyword>
<keyword id="KW-0472">Membrane</keyword>
<keyword id="KW-0560">Oxidoreductase</keyword>
<comment type="function">
    <text evidence="1">Catalyzes the conversion of L-lactate to pyruvate. Is coupled to the respiratory chain.</text>
</comment>
<comment type="catalytic activity">
    <reaction evidence="1">
        <text>(S)-lactate + A = pyruvate + AH2</text>
        <dbReference type="Rhea" id="RHEA:45816"/>
        <dbReference type="ChEBI" id="CHEBI:13193"/>
        <dbReference type="ChEBI" id="CHEBI:15361"/>
        <dbReference type="ChEBI" id="CHEBI:16651"/>
        <dbReference type="ChEBI" id="CHEBI:17499"/>
    </reaction>
</comment>
<comment type="cofactor">
    <cofactor evidence="1">
        <name>FMN</name>
        <dbReference type="ChEBI" id="CHEBI:58210"/>
    </cofactor>
</comment>
<comment type="subcellular location">
    <subcellularLocation>
        <location evidence="1">Cell inner membrane</location>
        <topology evidence="1">Peripheral membrane protein</topology>
    </subcellularLocation>
</comment>
<comment type="similarity">
    <text evidence="1">Belongs to the FMN-dependent alpha-hydroxy acid dehydrogenase family.</text>
</comment>